<dbReference type="EMBL" id="AM406670">
    <property type="protein sequence ID" value="CAL95515.1"/>
    <property type="molecule type" value="Genomic_DNA"/>
</dbReference>
<dbReference type="RefSeq" id="WP_011766625.1">
    <property type="nucleotide sequence ID" value="NC_008702.1"/>
</dbReference>
<dbReference type="SMR" id="A1K9L0"/>
<dbReference type="STRING" id="62928.azo2899"/>
<dbReference type="KEGG" id="aoa:dqs_3039"/>
<dbReference type="KEGG" id="azo:azo2899"/>
<dbReference type="eggNOG" id="COG0806">
    <property type="taxonomic scope" value="Bacteria"/>
</dbReference>
<dbReference type="HOGENOM" id="CLU_077636_1_0_4"/>
<dbReference type="OrthoDB" id="9783509at2"/>
<dbReference type="Proteomes" id="UP000002588">
    <property type="component" value="Chromosome"/>
</dbReference>
<dbReference type="GO" id="GO:0005737">
    <property type="term" value="C:cytoplasm"/>
    <property type="evidence" value="ECO:0007669"/>
    <property type="project" value="UniProtKB-SubCell"/>
</dbReference>
<dbReference type="GO" id="GO:0005840">
    <property type="term" value="C:ribosome"/>
    <property type="evidence" value="ECO:0007669"/>
    <property type="project" value="InterPro"/>
</dbReference>
<dbReference type="GO" id="GO:0043022">
    <property type="term" value="F:ribosome binding"/>
    <property type="evidence" value="ECO:0007669"/>
    <property type="project" value="InterPro"/>
</dbReference>
<dbReference type="GO" id="GO:0042274">
    <property type="term" value="P:ribosomal small subunit biogenesis"/>
    <property type="evidence" value="ECO:0007669"/>
    <property type="project" value="UniProtKB-UniRule"/>
</dbReference>
<dbReference type="GO" id="GO:0006364">
    <property type="term" value="P:rRNA processing"/>
    <property type="evidence" value="ECO:0007669"/>
    <property type="project" value="UniProtKB-UniRule"/>
</dbReference>
<dbReference type="Gene3D" id="2.30.30.240">
    <property type="entry name" value="PRC-barrel domain"/>
    <property type="match status" value="1"/>
</dbReference>
<dbReference type="Gene3D" id="2.40.30.60">
    <property type="entry name" value="RimM"/>
    <property type="match status" value="1"/>
</dbReference>
<dbReference type="HAMAP" id="MF_00014">
    <property type="entry name" value="Ribosome_mat_RimM"/>
    <property type="match status" value="1"/>
</dbReference>
<dbReference type="InterPro" id="IPR011033">
    <property type="entry name" value="PRC_barrel-like_sf"/>
</dbReference>
<dbReference type="InterPro" id="IPR056792">
    <property type="entry name" value="PRC_RimM"/>
</dbReference>
<dbReference type="InterPro" id="IPR011961">
    <property type="entry name" value="RimM"/>
</dbReference>
<dbReference type="InterPro" id="IPR002676">
    <property type="entry name" value="RimM_N"/>
</dbReference>
<dbReference type="InterPro" id="IPR036976">
    <property type="entry name" value="RimM_N_sf"/>
</dbReference>
<dbReference type="InterPro" id="IPR009000">
    <property type="entry name" value="Transl_B-barrel_sf"/>
</dbReference>
<dbReference type="NCBIfam" id="TIGR02273">
    <property type="entry name" value="16S_RimM"/>
    <property type="match status" value="1"/>
</dbReference>
<dbReference type="PANTHER" id="PTHR33692">
    <property type="entry name" value="RIBOSOME MATURATION FACTOR RIMM"/>
    <property type="match status" value="1"/>
</dbReference>
<dbReference type="PANTHER" id="PTHR33692:SF1">
    <property type="entry name" value="RIBOSOME MATURATION FACTOR RIMM"/>
    <property type="match status" value="1"/>
</dbReference>
<dbReference type="Pfam" id="PF24986">
    <property type="entry name" value="PRC_RimM"/>
    <property type="match status" value="1"/>
</dbReference>
<dbReference type="Pfam" id="PF01782">
    <property type="entry name" value="RimM"/>
    <property type="match status" value="1"/>
</dbReference>
<dbReference type="SUPFAM" id="SSF50346">
    <property type="entry name" value="PRC-barrel domain"/>
    <property type="match status" value="1"/>
</dbReference>
<dbReference type="SUPFAM" id="SSF50447">
    <property type="entry name" value="Translation proteins"/>
    <property type="match status" value="1"/>
</dbReference>
<feature type="chain" id="PRO_1000001150" description="Ribosome maturation factor RimM">
    <location>
        <begin position="1"/>
        <end position="168"/>
    </location>
</feature>
<feature type="domain" description="PRC barrel" evidence="1">
    <location>
        <begin position="96"/>
        <end position="168"/>
    </location>
</feature>
<proteinExistence type="inferred from homology"/>
<organism>
    <name type="scientific">Azoarcus sp. (strain BH72)</name>
    <dbReference type="NCBI Taxonomy" id="418699"/>
    <lineage>
        <taxon>Bacteria</taxon>
        <taxon>Pseudomonadati</taxon>
        <taxon>Pseudomonadota</taxon>
        <taxon>Betaproteobacteria</taxon>
        <taxon>Rhodocyclales</taxon>
        <taxon>Zoogloeaceae</taxon>
        <taxon>Azoarcus</taxon>
    </lineage>
</organism>
<accession>A1K9L0</accession>
<comment type="function">
    <text evidence="1">An accessory protein needed during the final step in the assembly of 30S ribosomal subunit, possibly for assembly of the head region. Essential for efficient processing of 16S rRNA. May be needed both before and after RbfA during the maturation of 16S rRNA. It has affinity for free ribosomal 30S subunits but not for 70S ribosomes.</text>
</comment>
<comment type="subunit">
    <text evidence="1">Binds ribosomal protein uS19.</text>
</comment>
<comment type="subcellular location">
    <subcellularLocation>
        <location evidence="1">Cytoplasm</location>
    </subcellularLocation>
</comment>
<comment type="domain">
    <text evidence="1">The PRC barrel domain binds ribosomal protein uS19.</text>
</comment>
<comment type="similarity">
    <text evidence="1">Belongs to the RimM family.</text>
</comment>
<name>RIMM_AZOSB</name>
<protein>
    <recommendedName>
        <fullName evidence="1">Ribosome maturation factor RimM</fullName>
    </recommendedName>
</protein>
<evidence type="ECO:0000255" key="1">
    <source>
        <dbReference type="HAMAP-Rule" id="MF_00014"/>
    </source>
</evidence>
<reference key="1">
    <citation type="journal article" date="2006" name="Nat. Biotechnol.">
        <title>Complete genome of the mutualistic, N2-fixing grass endophyte Azoarcus sp. strain BH72.</title>
        <authorList>
            <person name="Krause A."/>
            <person name="Ramakumar A."/>
            <person name="Bartels D."/>
            <person name="Battistoni F."/>
            <person name="Bekel T."/>
            <person name="Boch J."/>
            <person name="Boehm M."/>
            <person name="Friedrich F."/>
            <person name="Hurek T."/>
            <person name="Krause L."/>
            <person name="Linke B."/>
            <person name="McHardy A.C."/>
            <person name="Sarkar A."/>
            <person name="Schneiker S."/>
            <person name="Syed A.A."/>
            <person name="Thauer R."/>
            <person name="Vorhoelter F.-J."/>
            <person name="Weidner S."/>
            <person name="Puehler A."/>
            <person name="Reinhold-Hurek B."/>
            <person name="Kaiser O."/>
            <person name="Goesmann A."/>
        </authorList>
    </citation>
    <scope>NUCLEOTIDE SEQUENCE [LARGE SCALE GENOMIC DNA]</scope>
    <source>
        <strain>BH72</strain>
    </source>
</reference>
<sequence>MMVLGRIVAPFGVQGWLKIHPFGDDPAAWRKMTHWWLAEDPDGPESAWVQYKLASCRPHGKGLVALLEGVPDRNAAEAIEGRYVGAPRDAMPAPEKDEYYWGDLVGLDVVNETDETLGRVSGLISTGAHDVLQVEDGETERLIPFVAAYVLDVDLAARRIRVAWQKDW</sequence>
<gene>
    <name evidence="1" type="primary">rimM</name>
    <name type="ordered locus">azo2899</name>
</gene>
<keyword id="KW-0143">Chaperone</keyword>
<keyword id="KW-0963">Cytoplasm</keyword>
<keyword id="KW-1185">Reference proteome</keyword>
<keyword id="KW-0690">Ribosome biogenesis</keyword>
<keyword id="KW-0698">rRNA processing</keyword>